<accession>P85818</accession>
<protein>
    <recommendedName>
        <fullName evidence="4">SIFamide related peptide</fullName>
        <shortName evidence="4">Rhopr-SIFa</shortName>
    </recommendedName>
    <component>
        <recommendedName>
            <fullName evidence="4">SIFamide related peptide(2-12)</fullName>
            <shortName>Rhopr-SIFa(2-12)</shortName>
        </recommendedName>
    </component>
    <component>
        <recommendedName>
            <fullName evidence="4">SIFamide related peptide(3-12)</fullName>
            <shortName>Rhopr-SIFa(3-12)</shortName>
        </recommendedName>
    </component>
    <component>
        <recommendedName>
            <fullName evidence="4">SIFamide related peptide(4-12)</fullName>
            <shortName>Rhopr-SIFa(4-12)</shortName>
        </recommendedName>
    </component>
</protein>
<comment type="subcellular location">
    <subcellularLocation>
        <location evidence="1">Secreted</location>
    </subcellularLocation>
</comment>
<comment type="mass spectrometry">
    <molecule>SIFamide related peptide</molecule>
</comment>
<comment type="mass spectrometry">
    <molecule>SIFamide related peptide(2-12)</molecule>
</comment>
<comment type="mass spectrometry">
    <molecule>SIFamide related peptide(3-12)</molecule>
</comment>
<comment type="mass spectrometry">
    <molecule>SIFamide related peptide(4-12)</molecule>
</comment>
<comment type="similarity">
    <text evidence="2">Belongs to the FARP (FMRFamide related peptide) family.</text>
</comment>
<proteinExistence type="evidence at protein level"/>
<sequence>TYKKPPFNGSIF</sequence>
<feature type="peptide" id="PRO_0000365763" description="SIFamide related peptide" evidence="3">
    <location>
        <begin position="1"/>
        <end position="12"/>
    </location>
</feature>
<feature type="peptide" id="PRO_0000365764" description="SIFamide related peptide(2-12)" evidence="3">
    <location>
        <begin position="2"/>
        <end position="12"/>
    </location>
</feature>
<feature type="peptide" id="PRO_0000365765" description="SIFamide related peptide(3-12)" evidence="3">
    <location>
        <begin position="3"/>
        <end position="12"/>
    </location>
</feature>
<feature type="peptide" id="PRO_0000365766" description="SIFamide related peptide(4-12)" evidence="3">
    <location>
        <begin position="4"/>
        <end position="12"/>
    </location>
</feature>
<feature type="modified residue" description="Phenylalanine amide" evidence="3">
    <location>
        <position position="12"/>
    </location>
</feature>
<feature type="unsure residue" description="I or L" evidence="3">
    <location>
        <position position="11"/>
    </location>
</feature>
<evidence type="ECO:0000250" key="1">
    <source>
        <dbReference type="UniProtKB" id="Q867W1"/>
    </source>
</evidence>
<evidence type="ECO:0000255" key="2"/>
<evidence type="ECO:0000269" key="3">
    <source>
    </source>
</evidence>
<evidence type="ECO:0000303" key="4">
    <source>
    </source>
</evidence>
<evidence type="ECO:0000305" key="5"/>
<reference evidence="5" key="1">
    <citation type="journal article" date="2009" name="Proteomics">
        <title>The neuropeptidome of Rhodnius prolixus brain.</title>
        <authorList>
            <person name="Ons S."/>
            <person name="Richter F."/>
            <person name="Urlaub H."/>
            <person name="Pomar R.R."/>
        </authorList>
    </citation>
    <scope>PROTEIN SEQUENCE</scope>
    <scope>MASS SPECTROMETRY</scope>
    <scope>AMIDATION AT PHE-12</scope>
    <source>
        <tissue evidence="3">Brain</tissue>
    </source>
</reference>
<name>FAR2_RHOPR</name>
<keyword id="KW-0027">Amidation</keyword>
<keyword id="KW-0903">Direct protein sequencing</keyword>
<keyword id="KW-0527">Neuropeptide</keyword>
<keyword id="KW-1185">Reference proteome</keyword>
<keyword id="KW-0964">Secreted</keyword>
<dbReference type="InParanoid" id="P85818"/>
<dbReference type="Proteomes" id="UP000015103">
    <property type="component" value="Unassembled WGS sequence"/>
</dbReference>
<dbReference type="GO" id="GO:0005576">
    <property type="term" value="C:extracellular region"/>
    <property type="evidence" value="ECO:0007669"/>
    <property type="project" value="UniProtKB-SubCell"/>
</dbReference>
<dbReference type="GO" id="GO:0007218">
    <property type="term" value="P:neuropeptide signaling pathway"/>
    <property type="evidence" value="ECO:0007669"/>
    <property type="project" value="UniProtKB-KW"/>
</dbReference>
<organism>
    <name type="scientific">Rhodnius prolixus</name>
    <name type="common">Triatomid bug</name>
    <dbReference type="NCBI Taxonomy" id="13249"/>
    <lineage>
        <taxon>Eukaryota</taxon>
        <taxon>Metazoa</taxon>
        <taxon>Ecdysozoa</taxon>
        <taxon>Arthropoda</taxon>
        <taxon>Hexapoda</taxon>
        <taxon>Insecta</taxon>
        <taxon>Pterygota</taxon>
        <taxon>Neoptera</taxon>
        <taxon>Paraneoptera</taxon>
        <taxon>Hemiptera</taxon>
        <taxon>Heteroptera</taxon>
        <taxon>Panheteroptera</taxon>
        <taxon>Cimicomorpha</taxon>
        <taxon>Reduviidae</taxon>
        <taxon>Triatominae</taxon>
        <taxon>Rhodnius</taxon>
    </lineage>
</organism>